<keyword id="KW-0369">Histidine metabolism</keyword>
<keyword id="KW-0456">Lyase</keyword>
<keyword id="KW-1185">Reference proteome</keyword>
<accession>Q20502</accession>
<gene>
    <name evidence="6" type="primary">haly-1</name>
    <name evidence="6" type="ORF">F47B10.2</name>
</gene>
<feature type="chain" id="PRO_0000161061" description="Histidine ammonia-lyase">
    <location>
        <begin position="1"/>
        <end position="677"/>
    </location>
</feature>
<feature type="modified residue" description="2,3-didehydroalanine (Ser)" evidence="3">
    <location>
        <position position="270"/>
    </location>
</feature>
<feature type="cross-link" description="5-imidazolinone (Cys-Gly)" evidence="1">
    <location>
        <begin position="269"/>
        <end position="271"/>
    </location>
</feature>
<feature type="mutagenesis site" description="In am130; causes strong resistance to nickel and zinc toxicity." evidence="4">
    <original>D</original>
    <variation>N</variation>
    <location>
        <position position="536"/>
    </location>
</feature>
<reference key="1">
    <citation type="journal article" date="1998" name="Science">
        <title>Genome sequence of the nematode C. elegans: a platform for investigating biology.</title>
        <authorList>
            <consortium name="The C. elegans sequencing consortium"/>
        </authorList>
    </citation>
    <scope>NUCLEOTIDE SEQUENCE [LARGE SCALE GENOMIC DNA]</scope>
    <source>
        <strain>Bristol N2</strain>
    </source>
</reference>
<reference key="2">
    <citation type="journal article" date="2011" name="PLoS Genet.">
        <title>Histidine protects against zinc and nickel toxicity in Caenorhabditis elegans.</title>
        <authorList>
            <person name="Murphy J.T."/>
            <person name="Bruinsma J.J."/>
            <person name="Schneider D.L."/>
            <person name="Collier S."/>
            <person name="Guthrie J."/>
            <person name="Chinwalla A."/>
            <person name="Robertson J.D."/>
            <person name="Mardis E.R."/>
            <person name="Kornfeld K."/>
        </authorList>
    </citation>
    <scope>DISRUPTION PHENOTYPE</scope>
    <scope>MUTAGENESIS OF ASP-536</scope>
</reference>
<name>HUTH1_CAEEL</name>
<proteinExistence type="evidence at protein level"/>
<comment type="catalytic activity">
    <reaction evidence="3">
        <text>L-histidine = trans-urocanate + NH4(+)</text>
        <dbReference type="Rhea" id="RHEA:21232"/>
        <dbReference type="ChEBI" id="CHEBI:17771"/>
        <dbReference type="ChEBI" id="CHEBI:28938"/>
        <dbReference type="ChEBI" id="CHEBI:57595"/>
        <dbReference type="EC" id="4.3.1.3"/>
    </reaction>
</comment>
<comment type="pathway">
    <text evidence="1">Amino-acid degradation; L-histidine degradation into L-glutamate; N-formimidoyl-L-glutamate from L-histidine: step 1/3.</text>
</comment>
<comment type="PTM">
    <text evidence="1">Contains an active site 4-methylidene-imidazol-5-one (MIO), which is formed autocatalytically by cyclization and dehydration of residues Cys-Ser-Gly.</text>
</comment>
<comment type="disruption phenotype">
    <text evidence="4">Defective histidine metabolism resulting in elevated histidine levels and resistance to nickel and zinc toxicity. Additionally, slightly resistant to copper, slightly sensitive to cobalt and iron and substantially sensitive to manganese.</text>
</comment>
<comment type="similarity">
    <text evidence="5">Belongs to the PAL/histidase family.</text>
</comment>
<organism>
    <name type="scientific">Caenorhabditis elegans</name>
    <dbReference type="NCBI Taxonomy" id="6239"/>
    <lineage>
        <taxon>Eukaryota</taxon>
        <taxon>Metazoa</taxon>
        <taxon>Ecdysozoa</taxon>
        <taxon>Nematoda</taxon>
        <taxon>Chromadorea</taxon>
        <taxon>Rhabditida</taxon>
        <taxon>Rhabditina</taxon>
        <taxon>Rhabditomorpha</taxon>
        <taxon>Rhabditoidea</taxon>
        <taxon>Rhabditidae</taxon>
        <taxon>Peloderinae</taxon>
        <taxon>Caenorhabditis</taxon>
    </lineage>
</organism>
<sequence length="677" mass="74635">MRLQVQIGTECVVVPCKPDDTIHAVAKKSVEKLRRLRPKLPLADDYFEVRRTVGNSLLDPEDLVSDVLKDSDFIIVAASVEETEDAKEAKKQEEIDNARAEIEKIDNRRRKVSFADSLAPMVLAPPTKLLILDGNSLLPEDLVRCEKGECAIQLSMESEDRIRKARTFLEKIASEHRAVYGVTTGFGTFSNVTIPPEKLKKLQLNLIRSHATGYGEPLAPNRARMLLALRINILAKGHSGISVENIKKMIAAFNAFCVSYVPQQGTVGCSGDLCPLAHLALGLLGEGKMWSPTTGWQPADVVLKKNNLEPLELGPKEGLALINGTQMVTALGAYTLERAHNIARQADVIAALSLDVLKGTTRAYDPDIHRIRPHRGQNLSALRLRALLHSEANPSQIAESHRNCTKVQDAYTLRCVPQVHGVVHDTIEFVREIITTEMNSATDNPLVFADREEIISGGNFHGEYPAKALDFLAIAVAELAQMSERRLERLVNKELSGLPTFLTPDGGLNSGFMTVQLCAASLVSENKVLCHPSSVDSIPTSCNQEDHVSMGGFAARKALTVVEHVEAVLAMELLAACQGIEFLKPLISTAPLHKIYQLVRSVAPPLNEDRYMKPEIDAVLEMIRENRIWEAVLPHLETLEAMEELDPDALRQFTKTPTGIVQDRSMIPISDDEESIE</sequence>
<protein>
    <recommendedName>
        <fullName evidence="6">Histidine ammonia-lyase</fullName>
        <shortName evidence="2">Histidase</shortName>
        <ecNumber evidence="3">4.3.1.3</ecNumber>
    </recommendedName>
</protein>
<evidence type="ECO:0000250" key="1">
    <source>
        <dbReference type="UniProtKB" id="P21310"/>
    </source>
</evidence>
<evidence type="ECO:0000250" key="2">
    <source>
        <dbReference type="UniProtKB" id="P42357"/>
    </source>
</evidence>
<evidence type="ECO:0000255" key="3">
    <source>
        <dbReference type="PROSITE-ProRule" id="PRU10122"/>
    </source>
</evidence>
<evidence type="ECO:0000269" key="4">
    <source>
    </source>
</evidence>
<evidence type="ECO:0000305" key="5"/>
<evidence type="ECO:0000312" key="6">
    <source>
        <dbReference type="WormBase" id="F47B10.2"/>
    </source>
</evidence>
<dbReference type="EC" id="4.3.1.3" evidence="3"/>
<dbReference type="EMBL" id="Z68004">
    <property type="protein sequence ID" value="CAA91982.1"/>
    <property type="molecule type" value="Genomic_DNA"/>
</dbReference>
<dbReference type="PIR" id="T22333">
    <property type="entry name" value="T22333"/>
</dbReference>
<dbReference type="RefSeq" id="NP_509820.1">
    <property type="nucleotide sequence ID" value="NM_077419.7"/>
</dbReference>
<dbReference type="SMR" id="Q20502"/>
<dbReference type="BioGRID" id="46190">
    <property type="interactions" value="13"/>
</dbReference>
<dbReference type="DIP" id="DIP-27218N"/>
<dbReference type="FunCoup" id="Q20502">
    <property type="interactions" value="71"/>
</dbReference>
<dbReference type="IntAct" id="Q20502">
    <property type="interactions" value="3"/>
</dbReference>
<dbReference type="MINT" id="Q20502"/>
<dbReference type="STRING" id="6239.F47B10.2.1"/>
<dbReference type="iPTMnet" id="Q20502"/>
<dbReference type="PaxDb" id="6239-F47B10.2"/>
<dbReference type="PeptideAtlas" id="Q20502"/>
<dbReference type="EnsemblMetazoa" id="F47B10.2.1">
    <property type="protein sequence ID" value="F47B10.2.1"/>
    <property type="gene ID" value="WBGene00009813"/>
</dbReference>
<dbReference type="GeneID" id="181279"/>
<dbReference type="KEGG" id="cel:CELE_F47B10.2"/>
<dbReference type="UCSC" id="F47B10.2">
    <property type="organism name" value="c. elegans"/>
</dbReference>
<dbReference type="AGR" id="WB:WBGene00009813"/>
<dbReference type="CTD" id="181279"/>
<dbReference type="WormBase" id="F47B10.2">
    <property type="protein sequence ID" value="CE03352"/>
    <property type="gene ID" value="WBGene00009813"/>
    <property type="gene designation" value="haly-1"/>
</dbReference>
<dbReference type="eggNOG" id="KOG0222">
    <property type="taxonomic scope" value="Eukaryota"/>
</dbReference>
<dbReference type="GeneTree" id="ENSGT00390000009047"/>
<dbReference type="HOGENOM" id="CLU_014801_4_0_1"/>
<dbReference type="InParanoid" id="Q20502"/>
<dbReference type="OMA" id="YSLRCMP"/>
<dbReference type="OrthoDB" id="10051290at2759"/>
<dbReference type="PhylomeDB" id="Q20502"/>
<dbReference type="Reactome" id="R-CEL-70921">
    <property type="pathway name" value="Histidine catabolism"/>
</dbReference>
<dbReference type="SignaLink" id="Q20502"/>
<dbReference type="UniPathway" id="UPA00379">
    <property type="reaction ID" value="UER00549"/>
</dbReference>
<dbReference type="PRO" id="PR:Q20502"/>
<dbReference type="Proteomes" id="UP000001940">
    <property type="component" value="Chromosome X"/>
</dbReference>
<dbReference type="Bgee" id="WBGene00009813">
    <property type="expression patterns" value="Expressed in larva and 3 other cell types or tissues"/>
</dbReference>
<dbReference type="GO" id="GO:0005737">
    <property type="term" value="C:cytoplasm"/>
    <property type="evidence" value="ECO:0007669"/>
    <property type="project" value="InterPro"/>
</dbReference>
<dbReference type="GO" id="GO:0004397">
    <property type="term" value="F:histidine ammonia-lyase activity"/>
    <property type="evidence" value="ECO:0000318"/>
    <property type="project" value="GO_Central"/>
</dbReference>
<dbReference type="GO" id="GO:0006548">
    <property type="term" value="P:L-histidine catabolic process"/>
    <property type="evidence" value="ECO:0000315"/>
    <property type="project" value="WormBase"/>
</dbReference>
<dbReference type="GO" id="GO:0019556">
    <property type="term" value="P:L-histidine catabolic process to glutamate and formamide"/>
    <property type="evidence" value="ECO:0007669"/>
    <property type="project" value="UniProtKB-UniPathway"/>
</dbReference>
<dbReference type="GO" id="GO:0019557">
    <property type="term" value="P:L-histidine catabolic process to glutamate and formate"/>
    <property type="evidence" value="ECO:0007669"/>
    <property type="project" value="UniProtKB-UniPathway"/>
</dbReference>
<dbReference type="CDD" id="cd00332">
    <property type="entry name" value="PAL-HAL"/>
    <property type="match status" value="1"/>
</dbReference>
<dbReference type="FunFam" id="1.10.275.10:FF:000016">
    <property type="entry name" value="Histidine ammonia-lyase"/>
    <property type="match status" value="1"/>
</dbReference>
<dbReference type="FunFam" id="1.20.200.10:FF:000003">
    <property type="entry name" value="Histidine ammonia-lyase"/>
    <property type="match status" value="1"/>
</dbReference>
<dbReference type="Gene3D" id="1.20.200.10">
    <property type="entry name" value="Fumarase/aspartase (Central domain)"/>
    <property type="match status" value="1"/>
</dbReference>
<dbReference type="Gene3D" id="1.10.275.10">
    <property type="entry name" value="Fumarase/aspartase (N-terminal domain)"/>
    <property type="match status" value="1"/>
</dbReference>
<dbReference type="Gene3D" id="3.10.20.90">
    <property type="entry name" value="Phosphatidylinositol 3-kinase Catalytic Subunit, Chain A, domain 1"/>
    <property type="match status" value="1"/>
</dbReference>
<dbReference type="InterPro" id="IPR001106">
    <property type="entry name" value="Aromatic_Lyase"/>
</dbReference>
<dbReference type="InterPro" id="IPR024083">
    <property type="entry name" value="Fumarase/histidase_N"/>
</dbReference>
<dbReference type="InterPro" id="IPR005921">
    <property type="entry name" value="HutH"/>
</dbReference>
<dbReference type="InterPro" id="IPR008948">
    <property type="entry name" value="L-Aspartase-like"/>
</dbReference>
<dbReference type="InterPro" id="IPR021922">
    <property type="entry name" value="Par3/HAL_N"/>
</dbReference>
<dbReference type="InterPro" id="IPR022313">
    <property type="entry name" value="Phe/His_NH3-lyase_AS"/>
</dbReference>
<dbReference type="NCBIfam" id="TIGR01225">
    <property type="entry name" value="hutH"/>
    <property type="match status" value="1"/>
</dbReference>
<dbReference type="NCBIfam" id="NF006871">
    <property type="entry name" value="PRK09367.1"/>
    <property type="match status" value="1"/>
</dbReference>
<dbReference type="PANTHER" id="PTHR10362">
    <property type="entry name" value="HISTIDINE AMMONIA-LYASE"/>
    <property type="match status" value="1"/>
</dbReference>
<dbReference type="Pfam" id="PF00221">
    <property type="entry name" value="Lyase_aromatic"/>
    <property type="match status" value="1"/>
</dbReference>
<dbReference type="Pfam" id="PF12053">
    <property type="entry name" value="Par3_HAL_N_term"/>
    <property type="match status" value="1"/>
</dbReference>
<dbReference type="SUPFAM" id="SSF48557">
    <property type="entry name" value="L-aspartase-like"/>
    <property type="match status" value="1"/>
</dbReference>
<dbReference type="PROSITE" id="PS00488">
    <property type="entry name" value="PAL_HISTIDASE"/>
    <property type="match status" value="1"/>
</dbReference>